<comment type="function">
    <text evidence="1">Catalyzes the NADPH-dependent reduction of L-glutamate 5-phosphate into L-glutamate 5-semialdehyde and phosphate. The product spontaneously undergoes cyclization to form 1-pyrroline-5-carboxylate.</text>
</comment>
<comment type="catalytic activity">
    <reaction evidence="1">
        <text>L-glutamate 5-semialdehyde + phosphate + NADP(+) = L-glutamyl 5-phosphate + NADPH + H(+)</text>
        <dbReference type="Rhea" id="RHEA:19541"/>
        <dbReference type="ChEBI" id="CHEBI:15378"/>
        <dbReference type="ChEBI" id="CHEBI:43474"/>
        <dbReference type="ChEBI" id="CHEBI:57783"/>
        <dbReference type="ChEBI" id="CHEBI:58066"/>
        <dbReference type="ChEBI" id="CHEBI:58274"/>
        <dbReference type="ChEBI" id="CHEBI:58349"/>
        <dbReference type="EC" id="1.2.1.41"/>
    </reaction>
</comment>
<comment type="pathway">
    <text evidence="1">Amino-acid biosynthesis; L-proline biosynthesis; L-glutamate 5-semialdehyde from L-glutamate: step 2/2.</text>
</comment>
<comment type="subcellular location">
    <subcellularLocation>
        <location evidence="1">Cytoplasm</location>
    </subcellularLocation>
</comment>
<comment type="similarity">
    <text evidence="1">Belongs to the gamma-glutamyl phosphate reductase family.</text>
</comment>
<dbReference type="EC" id="1.2.1.41" evidence="1"/>
<dbReference type="EMBL" id="CP000967">
    <property type="protein sequence ID" value="ACD58626.1"/>
    <property type="molecule type" value="Genomic_DNA"/>
</dbReference>
<dbReference type="RefSeq" id="WP_011408714.1">
    <property type="nucleotide sequence ID" value="NC_010717.2"/>
</dbReference>
<dbReference type="SMR" id="B2SHW6"/>
<dbReference type="KEGG" id="xop:PXO_00342"/>
<dbReference type="eggNOG" id="COG0014">
    <property type="taxonomic scope" value="Bacteria"/>
</dbReference>
<dbReference type="HOGENOM" id="CLU_030231_0_0_6"/>
<dbReference type="UniPathway" id="UPA00098">
    <property type="reaction ID" value="UER00360"/>
</dbReference>
<dbReference type="Proteomes" id="UP000001740">
    <property type="component" value="Chromosome"/>
</dbReference>
<dbReference type="GO" id="GO:0005737">
    <property type="term" value="C:cytoplasm"/>
    <property type="evidence" value="ECO:0007669"/>
    <property type="project" value="UniProtKB-SubCell"/>
</dbReference>
<dbReference type="GO" id="GO:0004350">
    <property type="term" value="F:glutamate-5-semialdehyde dehydrogenase activity"/>
    <property type="evidence" value="ECO:0007669"/>
    <property type="project" value="UniProtKB-UniRule"/>
</dbReference>
<dbReference type="GO" id="GO:0050661">
    <property type="term" value="F:NADP binding"/>
    <property type="evidence" value="ECO:0007669"/>
    <property type="project" value="InterPro"/>
</dbReference>
<dbReference type="GO" id="GO:0055129">
    <property type="term" value="P:L-proline biosynthetic process"/>
    <property type="evidence" value="ECO:0007669"/>
    <property type="project" value="UniProtKB-UniRule"/>
</dbReference>
<dbReference type="CDD" id="cd07079">
    <property type="entry name" value="ALDH_F18-19_ProA-GPR"/>
    <property type="match status" value="1"/>
</dbReference>
<dbReference type="FunFam" id="3.40.309.10:FF:000006">
    <property type="entry name" value="Gamma-glutamyl phosphate reductase"/>
    <property type="match status" value="1"/>
</dbReference>
<dbReference type="Gene3D" id="3.40.605.10">
    <property type="entry name" value="Aldehyde Dehydrogenase, Chain A, domain 1"/>
    <property type="match status" value="1"/>
</dbReference>
<dbReference type="Gene3D" id="3.40.309.10">
    <property type="entry name" value="Aldehyde Dehydrogenase, Chain A, domain 2"/>
    <property type="match status" value="1"/>
</dbReference>
<dbReference type="HAMAP" id="MF_00412">
    <property type="entry name" value="ProA"/>
    <property type="match status" value="1"/>
</dbReference>
<dbReference type="InterPro" id="IPR016161">
    <property type="entry name" value="Ald_DH/histidinol_DH"/>
</dbReference>
<dbReference type="InterPro" id="IPR016163">
    <property type="entry name" value="Ald_DH_C"/>
</dbReference>
<dbReference type="InterPro" id="IPR016162">
    <property type="entry name" value="Ald_DH_N"/>
</dbReference>
<dbReference type="InterPro" id="IPR015590">
    <property type="entry name" value="Aldehyde_DH_dom"/>
</dbReference>
<dbReference type="InterPro" id="IPR020593">
    <property type="entry name" value="G-glutamylP_reductase_CS"/>
</dbReference>
<dbReference type="InterPro" id="IPR012134">
    <property type="entry name" value="Glu-5-SA_DH"/>
</dbReference>
<dbReference type="InterPro" id="IPR000965">
    <property type="entry name" value="GPR_dom"/>
</dbReference>
<dbReference type="NCBIfam" id="NF001221">
    <property type="entry name" value="PRK00197.1"/>
    <property type="match status" value="1"/>
</dbReference>
<dbReference type="NCBIfam" id="TIGR00407">
    <property type="entry name" value="proA"/>
    <property type="match status" value="1"/>
</dbReference>
<dbReference type="PANTHER" id="PTHR11063:SF8">
    <property type="entry name" value="DELTA-1-PYRROLINE-5-CARBOXYLATE SYNTHASE"/>
    <property type="match status" value="1"/>
</dbReference>
<dbReference type="PANTHER" id="PTHR11063">
    <property type="entry name" value="GLUTAMATE SEMIALDEHYDE DEHYDROGENASE"/>
    <property type="match status" value="1"/>
</dbReference>
<dbReference type="Pfam" id="PF00171">
    <property type="entry name" value="Aldedh"/>
    <property type="match status" value="1"/>
</dbReference>
<dbReference type="PIRSF" id="PIRSF000151">
    <property type="entry name" value="GPR"/>
    <property type="match status" value="1"/>
</dbReference>
<dbReference type="SUPFAM" id="SSF53720">
    <property type="entry name" value="ALDH-like"/>
    <property type="match status" value="1"/>
</dbReference>
<dbReference type="PROSITE" id="PS01223">
    <property type="entry name" value="PROA"/>
    <property type="match status" value="1"/>
</dbReference>
<organism>
    <name type="scientific">Xanthomonas oryzae pv. oryzae (strain PXO99A)</name>
    <dbReference type="NCBI Taxonomy" id="360094"/>
    <lineage>
        <taxon>Bacteria</taxon>
        <taxon>Pseudomonadati</taxon>
        <taxon>Pseudomonadota</taxon>
        <taxon>Gammaproteobacteria</taxon>
        <taxon>Lysobacterales</taxon>
        <taxon>Lysobacteraceae</taxon>
        <taxon>Xanthomonas</taxon>
    </lineage>
</organism>
<keyword id="KW-0028">Amino-acid biosynthesis</keyword>
<keyword id="KW-0963">Cytoplasm</keyword>
<keyword id="KW-0521">NADP</keyword>
<keyword id="KW-0560">Oxidoreductase</keyword>
<keyword id="KW-0641">Proline biosynthesis</keyword>
<reference key="1">
    <citation type="journal article" date="2008" name="BMC Genomics">
        <title>Genome sequence and rapid evolution of the rice pathogen Xanthomonas oryzae pv. oryzae PXO99A.</title>
        <authorList>
            <person name="Salzberg S.L."/>
            <person name="Sommer D.D."/>
            <person name="Schatz M.C."/>
            <person name="Phillippy A.M."/>
            <person name="Rabinowicz P.D."/>
            <person name="Tsuge S."/>
            <person name="Furutani A."/>
            <person name="Ochiai H."/>
            <person name="Delcher A.L."/>
            <person name="Kelley D."/>
            <person name="Madupu R."/>
            <person name="Puiu D."/>
            <person name="Radune D."/>
            <person name="Shumway M."/>
            <person name="Trapnell C."/>
            <person name="Aparna G."/>
            <person name="Jha G."/>
            <person name="Pandey A."/>
            <person name="Patil P.B."/>
            <person name="Ishihara H."/>
            <person name="Meyer D.F."/>
            <person name="Szurek B."/>
            <person name="Verdier V."/>
            <person name="Koebnik R."/>
            <person name="Dow J.M."/>
            <person name="Ryan R.P."/>
            <person name="Hirata H."/>
            <person name="Tsuyumu S."/>
            <person name="Won Lee S."/>
            <person name="Seo Y.-S."/>
            <person name="Sriariyanum M."/>
            <person name="Ronald P.C."/>
            <person name="Sonti R.V."/>
            <person name="Van Sluys M.-A."/>
            <person name="Leach J.E."/>
            <person name="White F.F."/>
            <person name="Bogdanove A.J."/>
        </authorList>
    </citation>
    <scope>NUCLEOTIDE SEQUENCE [LARGE SCALE GENOMIC DNA]</scope>
    <source>
        <strain>PXO99A</strain>
    </source>
</reference>
<evidence type="ECO:0000255" key="1">
    <source>
        <dbReference type="HAMAP-Rule" id="MF_00412"/>
    </source>
</evidence>
<name>PROA_XANOP</name>
<sequence length="414" mass="44359">MTIKTLALQCRDAAQVVSQLSSQAKCALLQAMAAALEADAGTILAANARDLEAARAKGTASAMLDRLALDDKRLAGIAAALREVALLPDPVGRITREDVRPNGIRVQKVRVPLGVIAMIYEARPNVTADAAALCIKAGNGVILRGGSEAIHSNIAIARALQRALREANVPEAALTLVEDLRRETMLELLQLNDIVDLAIPRGGEGLIRFVAEHARVPVIKHYKGVCHLFVDASAEMELALRLLIDGKATRPSACNSLETLLVHADIAERFLPLAAQALRERKVELRGDAATRAVLPEIAPASDDDYAAEFLDLILAMRVVADLDTALAHIRQYGSDHTEVIATQDPDNAERFVQSLRSAVVMVNASSRFSDGGELGLGAEIGISTTRLHSYGPMGLEALTVERFVVRGEGQVRH</sequence>
<accession>B2SHW6</accession>
<proteinExistence type="inferred from homology"/>
<protein>
    <recommendedName>
        <fullName evidence="1">Gamma-glutamyl phosphate reductase</fullName>
        <shortName evidence="1">GPR</shortName>
        <ecNumber evidence="1">1.2.1.41</ecNumber>
    </recommendedName>
    <alternativeName>
        <fullName evidence="1">Glutamate-5-semialdehyde dehydrogenase</fullName>
    </alternativeName>
    <alternativeName>
        <fullName evidence="1">Glutamyl-gamma-semialdehyde dehydrogenase</fullName>
        <shortName evidence="1">GSA dehydrogenase</shortName>
    </alternativeName>
</protein>
<feature type="chain" id="PRO_1000193676" description="Gamma-glutamyl phosphate reductase">
    <location>
        <begin position="1"/>
        <end position="414"/>
    </location>
</feature>
<gene>
    <name evidence="1" type="primary">proA</name>
    <name type="ordered locus">PXO_00342</name>
</gene>